<organism>
    <name type="scientific">Nicotiana tabacum</name>
    <name type="common">Common tobacco</name>
    <dbReference type="NCBI Taxonomy" id="4097"/>
    <lineage>
        <taxon>Eukaryota</taxon>
        <taxon>Viridiplantae</taxon>
        <taxon>Streptophyta</taxon>
        <taxon>Embryophyta</taxon>
        <taxon>Tracheophyta</taxon>
        <taxon>Spermatophyta</taxon>
        <taxon>Magnoliopsida</taxon>
        <taxon>eudicotyledons</taxon>
        <taxon>Gunneridae</taxon>
        <taxon>Pentapetalae</taxon>
        <taxon>asterids</taxon>
        <taxon>lamiids</taxon>
        <taxon>Solanales</taxon>
        <taxon>Solanaceae</taxon>
        <taxon>Nicotianoideae</taxon>
        <taxon>Nicotianeae</taxon>
        <taxon>Nicotiana</taxon>
    </lineage>
</organism>
<proteinExistence type="evidence at protein level"/>
<name>DES_TOBAC</name>
<protein>
    <recommendedName>
        <fullName evidence="7">Divinyl ether synthase CYP74D3</fullName>
    </recommendedName>
    <alternativeName>
        <fullName evidence="4">9-divinyl ether synthase 1</fullName>
        <shortName evidence="4">NtDES1</shortName>
    </alternativeName>
    <alternativeName>
        <fullName evidence="4">Colneleate synthase</fullName>
        <ecNumber evidence="2">4.2.1.121</ecNumber>
    </alternativeName>
    <alternativeName>
        <fullName evidence="5">Cytochrome P450 74D3</fullName>
    </alternativeName>
</protein>
<evidence type="ECO:0000250" key="1">
    <source>
        <dbReference type="UniProtKB" id="Q96242"/>
    </source>
</evidence>
<evidence type="ECO:0000269" key="2">
    <source>
    </source>
</evidence>
<evidence type="ECO:0000269" key="3">
    <source>
    </source>
</evidence>
<evidence type="ECO:0000303" key="4">
    <source>
    </source>
</evidence>
<evidence type="ECO:0000303" key="5">
    <source ref="2"/>
</evidence>
<evidence type="ECO:0000305" key="6"/>
<evidence type="ECO:0000305" key="7">
    <source ref="2"/>
</evidence>
<sequence>MSSFLVSSNNLPEREIPGDYGFPIISAIKDRYDYFYKQGEDVWFHSKAEKYNSTVVKINMAPGPFTSNDYKLVAFLDANSFVYMFDNSLIDKTDTLGGTFKPGKEYYGGYRPVAFVDTSDPNHAALKNYILTSFAKRHNLFIPLFRNSVSDHLFQNLEKQVSDQGKSDFNALLPNMTFGFIFRLLCDQTNPSDTVLGAQGPEHLRKWLFPQLIPSLSARKLPSFIEDLLFHNFLIPFGLVKSDYNKLVDAFSKNAGSMLDEAEKLGIKREEAVHNILFLVGINMFAGLNAFFPHLIRFVGEAGPTLHARLAKEIRTAIKEEGGAVTLSAINKMSLVESIVYETLRLRPPVPLQYGKAKKDFMVQSHDASYMIKKGQFLVGYQPMASRDPKIFDKPDDFIPDRFMGEGVKMLKHVLWSNGRETENPAPDNKQCAGKDLVHLLGRLMLVEFFLRYDTFTVEITPLFRAPNVAIKTLTKAT</sequence>
<reference key="1">
    <citation type="journal article" date="2007" name="Plant Physiol.">
        <title>Characterization of a divinyl ether biosynthetic pathway specifically associated with pathogenesis in tobacco.</title>
        <authorList>
            <person name="Fammartino A."/>
            <person name="Cardinale F."/>
            <person name="Gobel C."/>
            <person name="Mene-Saffrane L."/>
            <person name="Fournier J."/>
            <person name="Feussner I."/>
            <person name="Esquerre-Tugaye M.T."/>
        </authorList>
    </citation>
    <scope>NUCLEOTIDE SEQUENCE [MRNA]</scope>
    <scope>FUNCTION</scope>
    <scope>CATALYTIC ACTIVITY</scope>
    <scope>INDUCTION BY ELICITOR</scope>
    <scope>TISSUE SPECIFICITY</scope>
    <scope>SUBCELLULAR LOCATION</scope>
    <source>
        <strain>cv. Wisconsin 38</strain>
    </source>
</reference>
<reference key="2">
    <citation type="journal article" date="2008" name="Trop. Plant Biol.">
        <title>Comparison of cytochrome P450 genes from six plant genomes.</title>
        <authorList>
            <person name="Nelson D.R."/>
            <person name="Ming R."/>
            <person name="Alam M."/>
            <person name="Schuler M.A."/>
        </authorList>
    </citation>
    <scope>NOMENCLATURE</scope>
</reference>
<reference key="3">
    <citation type="journal article" date="2010" name="Plant Physiol. Biochem.">
        <title>Coordinated transcriptional regulation of the divinyl ether biosynthetic genes in tobacco by signal molecules related to defense.</title>
        <authorList>
            <person name="Fammartino A."/>
            <person name="Verdaguer B."/>
            <person name="Fournier J."/>
            <person name="Tamietti G."/>
            <person name="Carbonne F."/>
            <person name="Esquerre-Tugaye M.T."/>
            <person name="Cardinale F."/>
        </authorList>
    </citation>
    <scope>INDUCTION BY ELICITOR; ETHYLENE; JASMONIC ACID AND SALICYLIC ACID</scope>
</reference>
<dbReference type="EC" id="4.2.1.121" evidence="2"/>
<dbReference type="EMBL" id="AF070976">
    <property type="protein sequence ID" value="AAL40900.1"/>
    <property type="molecule type" value="mRNA"/>
</dbReference>
<dbReference type="RefSeq" id="NP_001312606.1">
    <property type="nucleotide sequence ID" value="NM_001325677.1"/>
</dbReference>
<dbReference type="SMR" id="Q8W2N5"/>
<dbReference type="STRING" id="4097.Q8W2N5"/>
<dbReference type="PaxDb" id="4097-Q8W2N5"/>
<dbReference type="GeneID" id="107799697"/>
<dbReference type="KEGG" id="nta:107799697"/>
<dbReference type="OrthoDB" id="2789670at2759"/>
<dbReference type="PhylomeDB" id="Q8W2N5"/>
<dbReference type="BRENDA" id="4.2.1.121">
    <property type="organism ID" value="3645"/>
</dbReference>
<dbReference type="Proteomes" id="UP000084051">
    <property type="component" value="Unplaced"/>
</dbReference>
<dbReference type="GO" id="GO:0005829">
    <property type="term" value="C:cytosol"/>
    <property type="evidence" value="ECO:0007669"/>
    <property type="project" value="UniProtKB-SubCell"/>
</dbReference>
<dbReference type="GO" id="GO:0102895">
    <property type="term" value="F:colneleate synthase activity"/>
    <property type="evidence" value="ECO:0007669"/>
    <property type="project" value="UniProtKB-EC"/>
</dbReference>
<dbReference type="GO" id="GO:0020037">
    <property type="term" value="F:heme binding"/>
    <property type="evidence" value="ECO:0007669"/>
    <property type="project" value="InterPro"/>
</dbReference>
<dbReference type="GO" id="GO:0005506">
    <property type="term" value="F:iron ion binding"/>
    <property type="evidence" value="ECO:0007669"/>
    <property type="project" value="InterPro"/>
</dbReference>
<dbReference type="GO" id="GO:0004497">
    <property type="term" value="F:monooxygenase activity"/>
    <property type="evidence" value="ECO:0000318"/>
    <property type="project" value="GO_Central"/>
</dbReference>
<dbReference type="GO" id="GO:0016705">
    <property type="term" value="F:oxidoreductase activity, acting on paired donors, with incorporation or reduction of molecular oxygen"/>
    <property type="evidence" value="ECO:0007669"/>
    <property type="project" value="InterPro"/>
</dbReference>
<dbReference type="CDD" id="cd11071">
    <property type="entry name" value="CYP74"/>
    <property type="match status" value="1"/>
</dbReference>
<dbReference type="FunFam" id="1.10.630.10:FF:000024">
    <property type="entry name" value="Allene oxide synthase, chloroplastic"/>
    <property type="match status" value="1"/>
</dbReference>
<dbReference type="Gene3D" id="1.10.630.10">
    <property type="entry name" value="Cytochrome P450"/>
    <property type="match status" value="1"/>
</dbReference>
<dbReference type="InterPro" id="IPR001128">
    <property type="entry name" value="Cyt_P450"/>
</dbReference>
<dbReference type="InterPro" id="IPR002403">
    <property type="entry name" value="Cyt_P450_E_grp-IV"/>
</dbReference>
<dbReference type="InterPro" id="IPR036396">
    <property type="entry name" value="Cyt_P450_sf"/>
</dbReference>
<dbReference type="PANTHER" id="PTHR24286:SF253">
    <property type="entry name" value="9-DIVINYL ETHER SYNTHASE"/>
    <property type="match status" value="1"/>
</dbReference>
<dbReference type="PANTHER" id="PTHR24286">
    <property type="entry name" value="CYTOCHROME P450 26"/>
    <property type="match status" value="1"/>
</dbReference>
<dbReference type="Pfam" id="PF00067">
    <property type="entry name" value="p450"/>
    <property type="match status" value="1"/>
</dbReference>
<dbReference type="PRINTS" id="PR00465">
    <property type="entry name" value="EP450IV"/>
</dbReference>
<dbReference type="SUPFAM" id="SSF48264">
    <property type="entry name" value="Cytochrome P450"/>
    <property type="match status" value="1"/>
</dbReference>
<feature type="chain" id="PRO_0000415390" description="Divinyl ether synthase CYP74D3">
    <location>
        <begin position="1"/>
        <end position="478"/>
    </location>
</feature>
<feature type="binding site" description="axial binding residue" evidence="1">
    <location>
        <position position="432"/>
    </location>
    <ligand>
        <name>heme</name>
        <dbReference type="ChEBI" id="CHEBI:30413"/>
    </ligand>
    <ligandPart>
        <name>Fe</name>
        <dbReference type="ChEBI" id="CHEBI:18248"/>
    </ligandPart>
</feature>
<keyword id="KW-0963">Cytoplasm</keyword>
<keyword id="KW-0349">Heme</keyword>
<keyword id="KW-0408">Iron</keyword>
<keyword id="KW-0456">Lyase</keyword>
<keyword id="KW-0479">Metal-binding</keyword>
<keyword id="KW-1185">Reference proteome</keyword>
<gene>
    <name evidence="4" type="primary">DES1</name>
    <name evidence="5" type="synonym">CYP74D3</name>
</gene>
<accession>Q8W2N5</accession>
<comment type="function">
    <text evidence="2">Strictly inducible cytochrome P450 involved in the biosynthesis of the anti-fungal toxins colneleate and colnelenate (PubMed:17085514). Can use (9S)-hydroperoxy-(10E,12Z)-octadecadienoate (9-HPOD) and (9S)-hydroperoxy-(10E,12Z,15Z)-octadecatrienoate (9-HPOT) as substrates, but has a very low activity with the corresponding 13-hydroperoxides (13-HPOD and 13-POT).</text>
</comment>
<comment type="catalytic activity">
    <reaction evidence="2">
        <text>(9S)-hydroperoxy-(10E,12Z)-octadecadienoate = colneleate + H2O</text>
        <dbReference type="Rhea" id="RHEA:28174"/>
        <dbReference type="ChEBI" id="CHEBI:15377"/>
        <dbReference type="ChEBI" id="CHEBI:60955"/>
        <dbReference type="ChEBI" id="CHEBI:60957"/>
        <dbReference type="EC" id="4.2.1.121"/>
    </reaction>
    <physiologicalReaction direction="left-to-right" evidence="2">
        <dbReference type="Rhea" id="RHEA:28175"/>
    </physiologicalReaction>
</comment>
<comment type="catalytic activity">
    <reaction evidence="2">
        <text>(9S)-hydroperoxy-(10E,12Z,15Z)-octadecatrienoate = colnelenate + H2O</text>
        <dbReference type="Rhea" id="RHEA:28178"/>
        <dbReference type="ChEBI" id="CHEBI:15377"/>
        <dbReference type="ChEBI" id="CHEBI:60960"/>
        <dbReference type="ChEBI" id="CHEBI:60962"/>
        <dbReference type="EC" id="4.2.1.121"/>
    </reaction>
    <physiologicalReaction direction="left-to-right" evidence="2">
        <dbReference type="Rhea" id="RHEA:28179"/>
    </physiologicalReaction>
</comment>
<comment type="subcellular location">
    <subcellularLocation>
        <location evidence="2">Cytoplasm</location>
        <location evidence="2">Cytosol</location>
    </subcellularLocation>
</comment>
<comment type="tissue specificity">
    <text evidence="2">Not detected in leaves, stems or roots of healthy plants.</text>
</comment>
<comment type="induction">
    <text evidence="2 3">Up-regulated 2 hours after addition of elicitor, with a peak after 4 hours. In roots inoculated with zoospores of P.parasitica (Ppm race 0), detected 1 day-post-inoculation. Up-regulated by ethylene and methyl jasmonate. Not induced systemically. Not induced by salicylic acid or by wounding.</text>
</comment>
<comment type="similarity">
    <text evidence="6">Belongs to the cytochrome P450 family. 9-divinyl ether synthase subfamily.</text>
</comment>